<accession>Q0T014</accession>
<sequence length="429" mass="48448">MKKQRNLRSMAAQAVEQVVEQGQSLSNILPPLQQKVSDKDKALLQELCFGVLRTLSQLDWLINKLMARPMTGKQRTVHYLIMVGLYQLLYTRIPPHAALAETVEGAIAIKRPQLKGLINGVLRQFQRRQEELLAEFNTRDARYLHPSWLLKRLQKAYPEQWQSIAEANNQRPPMWLRINRTHHSRDSWLALLDEAGMKGFPHADYPDAVRLETPAPVHALPGFEDGWVTVQDASAQGCMTWLAPQNGEHILDLCAAPGGKTTHILEVAPEAQVVAVDIDEQRLSRVYDNLKRLGMKATVKQGDGRYPSQWCGEQQFDRILLDAPCSATGVIRRHPDIKWLRRDRDIPELAQLQSEILDAIWPHLKSGGTLVYATCSVLPEENSLQIKAFLQRTADAELCETGTPEQPGKQNQPGAEEGDGFFYAKLIKK</sequence>
<evidence type="ECO:0000255" key="1">
    <source>
        <dbReference type="HAMAP-Rule" id="MF_01856"/>
    </source>
</evidence>
<evidence type="ECO:0000305" key="2"/>
<organism>
    <name type="scientific">Shigella flexneri serotype 5b (strain 8401)</name>
    <dbReference type="NCBI Taxonomy" id="373384"/>
    <lineage>
        <taxon>Bacteria</taxon>
        <taxon>Pseudomonadati</taxon>
        <taxon>Pseudomonadota</taxon>
        <taxon>Gammaproteobacteria</taxon>
        <taxon>Enterobacterales</taxon>
        <taxon>Enterobacteriaceae</taxon>
        <taxon>Shigella</taxon>
    </lineage>
</organism>
<proteinExistence type="inferred from homology"/>
<comment type="function">
    <text evidence="1">Specifically methylates the cytosine at position 967 (m5C967) of 16S rRNA.</text>
</comment>
<comment type="catalytic activity">
    <reaction evidence="1">
        <text>cytidine(967) in 16S rRNA + S-adenosyl-L-methionine = 5-methylcytidine(967) in 16S rRNA + S-adenosyl-L-homocysteine + H(+)</text>
        <dbReference type="Rhea" id="RHEA:42748"/>
        <dbReference type="Rhea" id="RHEA-COMP:10219"/>
        <dbReference type="Rhea" id="RHEA-COMP:10220"/>
        <dbReference type="ChEBI" id="CHEBI:15378"/>
        <dbReference type="ChEBI" id="CHEBI:57856"/>
        <dbReference type="ChEBI" id="CHEBI:59789"/>
        <dbReference type="ChEBI" id="CHEBI:74483"/>
        <dbReference type="ChEBI" id="CHEBI:82748"/>
        <dbReference type="EC" id="2.1.1.176"/>
    </reaction>
</comment>
<comment type="subcellular location">
    <subcellularLocation>
        <location evidence="1">Cytoplasm</location>
    </subcellularLocation>
</comment>
<comment type="similarity">
    <text evidence="1">Belongs to the class I-like SAM-binding methyltransferase superfamily. RsmB/NOP family.</text>
</comment>
<comment type="sequence caution" evidence="2">
    <conflict type="erroneous initiation">
        <sequence resource="EMBL-CDS" id="ABF05351"/>
    </conflict>
</comment>
<name>RSMB_SHIF8</name>
<feature type="chain" id="PRO_0000366179" description="Ribosomal RNA small subunit methyltransferase B">
    <location>
        <begin position="1"/>
        <end position="429"/>
    </location>
</feature>
<feature type="active site" description="Nucleophile" evidence="1">
    <location>
        <position position="375"/>
    </location>
</feature>
<feature type="binding site" evidence="1">
    <location>
        <begin position="254"/>
        <end position="260"/>
    </location>
    <ligand>
        <name>S-adenosyl-L-methionine</name>
        <dbReference type="ChEBI" id="CHEBI:59789"/>
    </ligand>
</feature>
<feature type="binding site" evidence="1">
    <location>
        <position position="277"/>
    </location>
    <ligand>
        <name>S-adenosyl-L-methionine</name>
        <dbReference type="ChEBI" id="CHEBI:59789"/>
    </ligand>
</feature>
<feature type="binding site" evidence="1">
    <location>
        <position position="303"/>
    </location>
    <ligand>
        <name>S-adenosyl-L-methionine</name>
        <dbReference type="ChEBI" id="CHEBI:59789"/>
    </ligand>
</feature>
<feature type="binding site" evidence="1">
    <location>
        <position position="322"/>
    </location>
    <ligand>
        <name>S-adenosyl-L-methionine</name>
        <dbReference type="ChEBI" id="CHEBI:59789"/>
    </ligand>
</feature>
<gene>
    <name evidence="1" type="primary">rsmB</name>
    <name evidence="1" type="synonym">sun</name>
    <name type="ordered locus">SFV_3308</name>
</gene>
<keyword id="KW-0963">Cytoplasm</keyword>
<keyword id="KW-0489">Methyltransferase</keyword>
<keyword id="KW-0694">RNA-binding</keyword>
<keyword id="KW-0698">rRNA processing</keyword>
<keyword id="KW-0949">S-adenosyl-L-methionine</keyword>
<keyword id="KW-0808">Transferase</keyword>
<protein>
    <recommendedName>
        <fullName evidence="1">Ribosomal RNA small subunit methyltransferase B</fullName>
        <ecNumber evidence="1">2.1.1.176</ecNumber>
    </recommendedName>
    <alternativeName>
        <fullName evidence="1">16S rRNA m5C967 methyltransferase</fullName>
    </alternativeName>
    <alternativeName>
        <fullName evidence="1">rRNA (cytosine-C(5)-)-methyltransferase RsmB</fullName>
    </alternativeName>
</protein>
<dbReference type="EC" id="2.1.1.176" evidence="1"/>
<dbReference type="EMBL" id="CP000266">
    <property type="protein sequence ID" value="ABF05351.1"/>
    <property type="status" value="ALT_INIT"/>
    <property type="molecule type" value="Genomic_DNA"/>
</dbReference>
<dbReference type="RefSeq" id="WP_005103892.1">
    <property type="nucleotide sequence ID" value="NC_008258.1"/>
</dbReference>
<dbReference type="SMR" id="Q0T014"/>
<dbReference type="KEGG" id="sfv:SFV_3308"/>
<dbReference type="HOGENOM" id="CLU_005316_0_4_6"/>
<dbReference type="Proteomes" id="UP000000659">
    <property type="component" value="Chromosome"/>
</dbReference>
<dbReference type="GO" id="GO:0005829">
    <property type="term" value="C:cytosol"/>
    <property type="evidence" value="ECO:0007669"/>
    <property type="project" value="TreeGrafter"/>
</dbReference>
<dbReference type="GO" id="GO:0003723">
    <property type="term" value="F:RNA binding"/>
    <property type="evidence" value="ECO:0007669"/>
    <property type="project" value="UniProtKB-KW"/>
</dbReference>
<dbReference type="GO" id="GO:0009383">
    <property type="term" value="F:rRNA (cytosine-C5-)-methyltransferase activity"/>
    <property type="evidence" value="ECO:0007669"/>
    <property type="project" value="TreeGrafter"/>
</dbReference>
<dbReference type="GO" id="GO:0006355">
    <property type="term" value="P:regulation of DNA-templated transcription"/>
    <property type="evidence" value="ECO:0007669"/>
    <property type="project" value="InterPro"/>
</dbReference>
<dbReference type="GO" id="GO:0070475">
    <property type="term" value="P:rRNA base methylation"/>
    <property type="evidence" value="ECO:0007669"/>
    <property type="project" value="TreeGrafter"/>
</dbReference>
<dbReference type="CDD" id="cd02440">
    <property type="entry name" value="AdoMet_MTases"/>
    <property type="match status" value="1"/>
</dbReference>
<dbReference type="CDD" id="cd00620">
    <property type="entry name" value="Methyltransferase_Sun"/>
    <property type="match status" value="1"/>
</dbReference>
<dbReference type="FunFam" id="1.10.287.730:FF:000001">
    <property type="entry name" value="Ribosomal RNA small subunit methyltransferase B"/>
    <property type="match status" value="1"/>
</dbReference>
<dbReference type="FunFam" id="1.10.940.10:FF:000002">
    <property type="entry name" value="Ribosomal RNA small subunit methyltransferase B"/>
    <property type="match status" value="1"/>
</dbReference>
<dbReference type="FunFam" id="3.30.70.1170:FF:000002">
    <property type="entry name" value="Ribosomal RNA small subunit methyltransferase B"/>
    <property type="match status" value="1"/>
</dbReference>
<dbReference type="FunFam" id="3.40.50.150:FF:000022">
    <property type="entry name" value="Ribosomal RNA small subunit methyltransferase B"/>
    <property type="match status" value="1"/>
</dbReference>
<dbReference type="Gene3D" id="1.10.287.730">
    <property type="entry name" value="Helix hairpin bin"/>
    <property type="match status" value="1"/>
</dbReference>
<dbReference type="Gene3D" id="1.10.940.10">
    <property type="entry name" value="NusB-like"/>
    <property type="match status" value="1"/>
</dbReference>
<dbReference type="Gene3D" id="3.30.70.1170">
    <property type="entry name" value="Sun protein, domain 3"/>
    <property type="match status" value="1"/>
</dbReference>
<dbReference type="Gene3D" id="3.40.50.150">
    <property type="entry name" value="Vaccinia Virus protein VP39"/>
    <property type="match status" value="1"/>
</dbReference>
<dbReference type="HAMAP" id="MF_01856">
    <property type="entry name" value="16SrRNA_methyltr_B"/>
    <property type="match status" value="1"/>
</dbReference>
<dbReference type="InterPro" id="IPR049560">
    <property type="entry name" value="MeTrfase_RsmB-F_NOP2_cat"/>
</dbReference>
<dbReference type="InterPro" id="IPR001678">
    <property type="entry name" value="MeTrfase_RsmB-F_NOP2_dom"/>
</dbReference>
<dbReference type="InterPro" id="IPR035926">
    <property type="entry name" value="NusB-like_sf"/>
</dbReference>
<dbReference type="InterPro" id="IPR006027">
    <property type="entry name" value="NusB_RsmB_TIM44"/>
</dbReference>
<dbReference type="InterPro" id="IPR023267">
    <property type="entry name" value="RCMT"/>
</dbReference>
<dbReference type="InterPro" id="IPR004573">
    <property type="entry name" value="rRNA_ssu_MeTfrase_B"/>
</dbReference>
<dbReference type="InterPro" id="IPR023541">
    <property type="entry name" value="rRNA_ssu_MeTfrase_B_ent"/>
</dbReference>
<dbReference type="InterPro" id="IPR054728">
    <property type="entry name" value="RsmB-like_ferredoxin"/>
</dbReference>
<dbReference type="InterPro" id="IPR048019">
    <property type="entry name" value="RsmB-like_N"/>
</dbReference>
<dbReference type="InterPro" id="IPR018314">
    <property type="entry name" value="RsmB/NOL1/NOP2-like_CS"/>
</dbReference>
<dbReference type="InterPro" id="IPR029063">
    <property type="entry name" value="SAM-dependent_MTases_sf"/>
</dbReference>
<dbReference type="NCBIfam" id="NF008149">
    <property type="entry name" value="PRK10901.1"/>
    <property type="match status" value="1"/>
</dbReference>
<dbReference type="NCBIfam" id="NF011494">
    <property type="entry name" value="PRK14902.1"/>
    <property type="match status" value="1"/>
</dbReference>
<dbReference type="NCBIfam" id="TIGR00563">
    <property type="entry name" value="rsmB"/>
    <property type="match status" value="1"/>
</dbReference>
<dbReference type="PANTHER" id="PTHR22807:SF61">
    <property type="entry name" value="NOL1_NOP2_SUN FAMILY PROTEIN _ ANTITERMINATION NUSB DOMAIN-CONTAINING PROTEIN"/>
    <property type="match status" value="1"/>
</dbReference>
<dbReference type="PANTHER" id="PTHR22807">
    <property type="entry name" value="NOP2 YEAST -RELATED NOL1/NOP2/FMU SUN DOMAIN-CONTAINING"/>
    <property type="match status" value="1"/>
</dbReference>
<dbReference type="Pfam" id="PF01189">
    <property type="entry name" value="Methyltr_RsmB-F"/>
    <property type="match status" value="1"/>
</dbReference>
<dbReference type="Pfam" id="PF01029">
    <property type="entry name" value="NusB"/>
    <property type="match status" value="1"/>
</dbReference>
<dbReference type="Pfam" id="PF22458">
    <property type="entry name" value="RsmF-B_ferredox"/>
    <property type="match status" value="1"/>
</dbReference>
<dbReference type="PRINTS" id="PR02008">
    <property type="entry name" value="RCMTFAMILY"/>
</dbReference>
<dbReference type="SUPFAM" id="SSF48013">
    <property type="entry name" value="NusB-like"/>
    <property type="match status" value="1"/>
</dbReference>
<dbReference type="SUPFAM" id="SSF53335">
    <property type="entry name" value="S-adenosyl-L-methionine-dependent methyltransferases"/>
    <property type="match status" value="1"/>
</dbReference>
<dbReference type="PROSITE" id="PS01153">
    <property type="entry name" value="NOL1_NOP2_SUN"/>
    <property type="match status" value="1"/>
</dbReference>
<dbReference type="PROSITE" id="PS51686">
    <property type="entry name" value="SAM_MT_RSMB_NOP"/>
    <property type="match status" value="1"/>
</dbReference>
<reference key="1">
    <citation type="journal article" date="2006" name="BMC Genomics">
        <title>Complete genome sequence of Shigella flexneri 5b and comparison with Shigella flexneri 2a.</title>
        <authorList>
            <person name="Nie H."/>
            <person name="Yang F."/>
            <person name="Zhang X."/>
            <person name="Yang J."/>
            <person name="Chen L."/>
            <person name="Wang J."/>
            <person name="Xiong Z."/>
            <person name="Peng J."/>
            <person name="Sun L."/>
            <person name="Dong J."/>
            <person name="Xue Y."/>
            <person name="Xu X."/>
            <person name="Chen S."/>
            <person name="Yao Z."/>
            <person name="Shen Y."/>
            <person name="Jin Q."/>
        </authorList>
    </citation>
    <scope>NUCLEOTIDE SEQUENCE [LARGE SCALE GENOMIC DNA]</scope>
    <source>
        <strain>8401</strain>
    </source>
</reference>